<comment type="function">
    <text evidence="1">Mediates the nuclear export of encapsidated genomic RNAs (ribonucleoproteins, RNPs). Acts as an adapter between viral RNPs complexes and the nuclear export machinery of the cell. Possesses no intrinsic RNA-binding activity, but includes a C-terminal M1-binding domain. This domain is believed to allow recognition of RNPs bound to the protein M1. Since protein M1 is not available in large quantities before late stages of infection, such an indirect recognition mechanism probably ensures that genomic RNPs are not exported from the host nucleus until sufficient quantities of viral mRNA and progeny genomic RNA have been synthesized. Furthermore, the RNPs enter the host cytoplasm only when associated with the M1 protein that is necessary to guide them to the plasma membrane. May down-regulate viral RNA synthesis when overproduced.</text>
</comment>
<comment type="subunit">
    <text evidence="1">Interacts with protein M1. May interact with host nucleoporin RAB/HRB and exportin XPO1/CRM1.</text>
</comment>
<comment type="subcellular location">
    <subcellularLocation>
        <location evidence="1">Virion</location>
    </subcellularLocation>
    <subcellularLocation>
        <location evidence="1">Host nucleus</location>
    </subcellularLocation>
</comment>
<comment type="alternative products">
    <event type="alternative splicing"/>
    <isoform>
        <id>O89747-1</id>
        <name>NEP</name>
        <name>NS2</name>
        <sequence type="displayed"/>
    </isoform>
    <isoform>
        <id>O89748-1</id>
        <name>NS1</name>
        <sequence type="external"/>
    </isoform>
</comment>
<comment type="similarity">
    <text evidence="1">Belongs to the influenza viruses NEP family.</text>
</comment>
<evidence type="ECO:0000255" key="1">
    <source>
        <dbReference type="HAMAP-Rule" id="MF_04067"/>
    </source>
</evidence>
<organism>
    <name type="scientific">Influenza A virus (strain A/Chicken/Hong Kong/220/1997 H5N1 genotype Gs/Gd)</name>
    <dbReference type="NCBI Taxonomy" id="100834"/>
    <lineage>
        <taxon>Viruses</taxon>
        <taxon>Riboviria</taxon>
        <taxon>Orthornavirae</taxon>
        <taxon>Negarnaviricota</taxon>
        <taxon>Polyploviricotina</taxon>
        <taxon>Insthoviricetes</taxon>
        <taxon>Articulavirales</taxon>
        <taxon>Orthomyxoviridae</taxon>
        <taxon>Alphainfluenzavirus</taxon>
        <taxon>Alphainfluenzavirus influenzae</taxon>
        <taxon>Influenza A virus</taxon>
    </lineage>
</organism>
<name>NEP_I97A0</name>
<accession>O89747</accession>
<sequence>MNSNTVSSFQDILKRMSKMQLGSSSEDLNGIITQFESLKLYRDSLGEAVMRMGDLYSLQNRNGKWREQLSQKFEEIRWLIEEVRHRLRITENSFEQITFMQALQLLLEVEQEIRTFSFQLI</sequence>
<proteinExistence type="inferred from homology"/>
<keyword id="KW-0025">Alternative splicing</keyword>
<keyword id="KW-1048">Host nucleus</keyword>
<keyword id="KW-0945">Host-virus interaction</keyword>
<keyword id="KW-0813">Transport</keyword>
<keyword id="KW-0946">Virion</keyword>
<protein>
    <recommendedName>
        <fullName evidence="1">Nuclear export protein</fullName>
        <shortName evidence="1">NEP</shortName>
    </recommendedName>
    <alternativeName>
        <fullName evidence="1">Non-structural protein 2</fullName>
        <shortName evidence="1">NS2</shortName>
    </alternativeName>
</protein>
<dbReference type="EMBL" id="AF046083">
    <property type="protein sequence ID" value="AAC32083.1"/>
    <property type="molecule type" value="Genomic_RNA"/>
</dbReference>
<dbReference type="SMR" id="O89747"/>
<dbReference type="GO" id="GO:0042025">
    <property type="term" value="C:host cell nucleus"/>
    <property type="evidence" value="ECO:0007669"/>
    <property type="project" value="UniProtKB-SubCell"/>
</dbReference>
<dbReference type="GO" id="GO:0044423">
    <property type="term" value="C:virion component"/>
    <property type="evidence" value="ECO:0007669"/>
    <property type="project" value="UniProtKB-UniRule"/>
</dbReference>
<dbReference type="GO" id="GO:0039675">
    <property type="term" value="P:exit of virus from host cell nucleus through nuclear pore"/>
    <property type="evidence" value="ECO:0007669"/>
    <property type="project" value="UniProtKB-UniRule"/>
</dbReference>
<dbReference type="Gene3D" id="1.10.287.230">
    <property type="match status" value="1"/>
</dbReference>
<dbReference type="Gene3D" id="1.10.287.10">
    <property type="entry name" value="S15/NS1, RNA-binding"/>
    <property type="match status" value="1"/>
</dbReference>
<dbReference type="HAMAP" id="MF_04067">
    <property type="entry name" value="INFV_NEP"/>
    <property type="match status" value="1"/>
</dbReference>
<dbReference type="InterPro" id="IPR000968">
    <property type="entry name" value="Flu_NS2"/>
</dbReference>
<dbReference type="Pfam" id="PF00601">
    <property type="entry name" value="Flu_NS2"/>
    <property type="match status" value="1"/>
</dbReference>
<dbReference type="SUPFAM" id="SSF101156">
    <property type="entry name" value="Nonstructural protein ns2, Nep, M1-binding domain"/>
    <property type="match status" value="1"/>
</dbReference>
<reference key="1">
    <citation type="journal article" date="1998" name="J. Virol.">
        <title>Comparisons of highly virulent H5N1 influenza A viruses isolated from humans and chickens from Hong Kong.</title>
        <authorList>
            <person name="Suarez D.L."/>
            <person name="Perdue M.L."/>
            <person name="Cox N."/>
            <person name="Rowe T."/>
            <person name="Bender C."/>
            <person name="Huang J."/>
            <person name="Swayne D.E."/>
        </authorList>
    </citation>
    <scope>NUCLEOTIDE SEQUENCE [GENOMIC RNA]</scope>
</reference>
<organismHost>
    <name type="scientific">Aves</name>
    <dbReference type="NCBI Taxonomy" id="8782"/>
</organismHost>
<organismHost>
    <name type="scientific">Felis catus</name>
    <name type="common">Cat</name>
    <name type="synonym">Felis silvestris catus</name>
    <dbReference type="NCBI Taxonomy" id="9685"/>
</organismHost>
<organismHost>
    <name type="scientific">Homo sapiens</name>
    <name type="common">Human</name>
    <dbReference type="NCBI Taxonomy" id="9606"/>
</organismHost>
<organismHost>
    <name type="scientific">Panthera pardus</name>
    <name type="common">Leopard</name>
    <name type="synonym">Felis pardus</name>
    <dbReference type="NCBI Taxonomy" id="9691"/>
</organismHost>
<organismHost>
    <name type="scientific">Panthera tigris</name>
    <name type="common">Tiger</name>
    <dbReference type="NCBI Taxonomy" id="9694"/>
</organismHost>
<organismHost>
    <name type="scientific">Sus scrofa</name>
    <name type="common">Pig</name>
    <dbReference type="NCBI Taxonomy" id="9823"/>
</organismHost>
<feature type="chain" id="PRO_0000324235" description="Nuclear export protein">
    <location>
        <begin position="1"/>
        <end position="121"/>
    </location>
</feature>
<feature type="short sequence motif" description="Nuclear export signal" evidence="1">
    <location>
        <begin position="12"/>
        <end position="21"/>
    </location>
</feature>
<feature type="short sequence motif" description="Nuclear export signal" evidence="1">
    <location>
        <begin position="85"/>
        <end position="94"/>
    </location>
</feature>
<gene>
    <name evidence="1" type="primary">NS</name>
</gene>